<comment type="similarity">
    <text evidence="1">Belongs to the bacterial ribosomal protein bS21 family.</text>
</comment>
<feature type="chain" id="PRO_1000120671" description="Small ribosomal subunit protein bS21">
    <location>
        <begin position="1"/>
        <end position="58"/>
    </location>
</feature>
<name>RS21_PICP2</name>
<accession>B1XPL6</accession>
<organism>
    <name type="scientific">Picosynechococcus sp. (strain ATCC 27264 / PCC 7002 / PR-6)</name>
    <name type="common">Agmenellum quadruplicatum</name>
    <dbReference type="NCBI Taxonomy" id="32049"/>
    <lineage>
        <taxon>Bacteria</taxon>
        <taxon>Bacillati</taxon>
        <taxon>Cyanobacteriota</taxon>
        <taxon>Cyanophyceae</taxon>
        <taxon>Oscillatoriophycideae</taxon>
        <taxon>Chroococcales</taxon>
        <taxon>Geminocystaceae</taxon>
        <taxon>Picosynechococcus</taxon>
    </lineage>
</organism>
<dbReference type="EMBL" id="CP000951">
    <property type="protein sequence ID" value="ACA99730.1"/>
    <property type="molecule type" value="Genomic_DNA"/>
</dbReference>
<dbReference type="RefSeq" id="WP_012307353.1">
    <property type="nucleotide sequence ID" value="NZ_JAHHPU010000002.1"/>
</dbReference>
<dbReference type="SMR" id="B1XPL6"/>
<dbReference type="STRING" id="32049.SYNPCC7002_A1741"/>
<dbReference type="KEGG" id="syp:SYNPCC7002_A1741"/>
<dbReference type="eggNOG" id="COG0828">
    <property type="taxonomic scope" value="Bacteria"/>
</dbReference>
<dbReference type="HOGENOM" id="CLU_159258_3_1_3"/>
<dbReference type="Proteomes" id="UP000001688">
    <property type="component" value="Chromosome"/>
</dbReference>
<dbReference type="GO" id="GO:1990904">
    <property type="term" value="C:ribonucleoprotein complex"/>
    <property type="evidence" value="ECO:0007669"/>
    <property type="project" value="UniProtKB-KW"/>
</dbReference>
<dbReference type="GO" id="GO:0005840">
    <property type="term" value="C:ribosome"/>
    <property type="evidence" value="ECO:0007669"/>
    <property type="project" value="UniProtKB-KW"/>
</dbReference>
<dbReference type="GO" id="GO:0003735">
    <property type="term" value="F:structural constituent of ribosome"/>
    <property type="evidence" value="ECO:0007669"/>
    <property type="project" value="InterPro"/>
</dbReference>
<dbReference type="GO" id="GO:0006412">
    <property type="term" value="P:translation"/>
    <property type="evidence" value="ECO:0007669"/>
    <property type="project" value="UniProtKB-UniRule"/>
</dbReference>
<dbReference type="Gene3D" id="1.20.5.1150">
    <property type="entry name" value="Ribosomal protein S8"/>
    <property type="match status" value="1"/>
</dbReference>
<dbReference type="HAMAP" id="MF_00358">
    <property type="entry name" value="Ribosomal_bS21"/>
    <property type="match status" value="1"/>
</dbReference>
<dbReference type="InterPro" id="IPR001911">
    <property type="entry name" value="Ribosomal_bS21"/>
</dbReference>
<dbReference type="InterPro" id="IPR018278">
    <property type="entry name" value="Ribosomal_bS21_CS"/>
</dbReference>
<dbReference type="InterPro" id="IPR038380">
    <property type="entry name" value="Ribosomal_bS21_sf"/>
</dbReference>
<dbReference type="NCBIfam" id="TIGR00030">
    <property type="entry name" value="S21p"/>
    <property type="match status" value="1"/>
</dbReference>
<dbReference type="PANTHER" id="PTHR21109">
    <property type="entry name" value="MITOCHONDRIAL 28S RIBOSOMAL PROTEIN S21"/>
    <property type="match status" value="1"/>
</dbReference>
<dbReference type="PANTHER" id="PTHR21109:SF0">
    <property type="entry name" value="SMALL RIBOSOMAL SUBUNIT PROTEIN BS21M"/>
    <property type="match status" value="1"/>
</dbReference>
<dbReference type="Pfam" id="PF01165">
    <property type="entry name" value="Ribosomal_S21"/>
    <property type="match status" value="1"/>
</dbReference>
<dbReference type="PRINTS" id="PR00976">
    <property type="entry name" value="RIBOSOMALS21"/>
</dbReference>
<dbReference type="PROSITE" id="PS01181">
    <property type="entry name" value="RIBOSOMAL_S21"/>
    <property type="match status" value="1"/>
</dbReference>
<evidence type="ECO:0000255" key="1">
    <source>
        <dbReference type="HAMAP-Rule" id="MF_00358"/>
    </source>
</evidence>
<evidence type="ECO:0000305" key="2"/>
<keyword id="KW-1185">Reference proteome</keyword>
<keyword id="KW-0687">Ribonucleoprotein</keyword>
<keyword id="KW-0689">Ribosomal protein</keyword>
<protein>
    <recommendedName>
        <fullName evidence="1">Small ribosomal subunit protein bS21</fullName>
    </recommendedName>
    <alternativeName>
        <fullName evidence="2">30S ribosomal protein S21</fullName>
    </alternativeName>
</protein>
<gene>
    <name evidence="1" type="primary">rpsU</name>
    <name evidence="1" type="synonym">rps21</name>
    <name type="ordered locus">SYNPCC7002_A1741</name>
</gene>
<sequence>MTQVVVGQNENIESALRRFKRQVSKAGIFADIKRRRHFETPIEKRKRKAVARRKKRFR</sequence>
<reference key="1">
    <citation type="submission" date="2008-02" db="EMBL/GenBank/DDBJ databases">
        <title>Complete sequence of Synechococcus sp. PCC 7002.</title>
        <authorList>
            <person name="Li T."/>
            <person name="Zhao J."/>
            <person name="Zhao C."/>
            <person name="Liu Z."/>
            <person name="Zhao F."/>
            <person name="Marquardt J."/>
            <person name="Nomura C.T."/>
            <person name="Persson S."/>
            <person name="Detter J.C."/>
            <person name="Richardson P.M."/>
            <person name="Lanz C."/>
            <person name="Schuster S.C."/>
            <person name="Wang J."/>
            <person name="Li S."/>
            <person name="Huang X."/>
            <person name="Cai T."/>
            <person name="Yu Z."/>
            <person name="Luo J."/>
            <person name="Zhao J."/>
            <person name="Bryant D.A."/>
        </authorList>
    </citation>
    <scope>NUCLEOTIDE SEQUENCE [LARGE SCALE GENOMIC DNA]</scope>
    <source>
        <strain>ATCC 27264 / PCC 7002 / PR-6</strain>
    </source>
</reference>
<proteinExistence type="inferred from homology"/>